<feature type="chain" id="PRO_0000425856" description="Cytochrome P450 72A13">
    <location>
        <begin position="1"/>
        <end position="512"/>
    </location>
</feature>
<feature type="transmembrane region" description="Helical" evidence="2">
    <location>
        <begin position="2"/>
        <end position="22"/>
    </location>
</feature>
<feature type="binding site" description="axial binding residue" evidence="1">
    <location>
        <position position="460"/>
    </location>
    <ligand>
        <name>heme</name>
        <dbReference type="ChEBI" id="CHEBI:30413"/>
    </ligand>
    <ligandPart>
        <name>Fe</name>
        <dbReference type="ChEBI" id="CHEBI:18248"/>
    </ligandPart>
</feature>
<gene>
    <name type="primary">CYP72A13</name>
    <name type="ordered locus">At3g14660</name>
    <name type="ORF">MIE1.16</name>
</gene>
<reference key="1">
    <citation type="journal article" date="2000" name="DNA Res.">
        <title>Structural analysis of Arabidopsis thaliana chromosome 3. I. Sequence features of the regions of 4,504,864 bp covered by sixty P1 and TAC clones.</title>
        <authorList>
            <person name="Sato S."/>
            <person name="Nakamura Y."/>
            <person name="Kaneko T."/>
            <person name="Katoh T."/>
            <person name="Asamizu E."/>
            <person name="Tabata S."/>
        </authorList>
    </citation>
    <scope>NUCLEOTIDE SEQUENCE [LARGE SCALE GENOMIC DNA]</scope>
    <source>
        <strain>cv. Columbia</strain>
    </source>
</reference>
<reference key="2">
    <citation type="journal article" date="2017" name="Plant J.">
        <title>Araport11: a complete reannotation of the Arabidopsis thaliana reference genome.</title>
        <authorList>
            <person name="Cheng C.Y."/>
            <person name="Krishnakumar V."/>
            <person name="Chan A.P."/>
            <person name="Thibaud-Nissen F."/>
            <person name="Schobel S."/>
            <person name="Town C.D."/>
        </authorList>
    </citation>
    <scope>GENOME REANNOTATION</scope>
    <source>
        <strain>cv. Columbia</strain>
    </source>
</reference>
<reference key="3">
    <citation type="journal article" date="2003" name="Science">
        <title>Empirical analysis of transcriptional activity in the Arabidopsis genome.</title>
        <authorList>
            <person name="Yamada K."/>
            <person name="Lim J."/>
            <person name="Dale J.M."/>
            <person name="Chen H."/>
            <person name="Shinn P."/>
            <person name="Palm C.J."/>
            <person name="Southwick A.M."/>
            <person name="Wu H.C."/>
            <person name="Kim C.J."/>
            <person name="Nguyen M."/>
            <person name="Pham P.K."/>
            <person name="Cheuk R.F."/>
            <person name="Karlin-Newmann G."/>
            <person name="Liu S.X."/>
            <person name="Lam B."/>
            <person name="Sakano H."/>
            <person name="Wu T."/>
            <person name="Yu G."/>
            <person name="Miranda M."/>
            <person name="Quach H.L."/>
            <person name="Tripp M."/>
            <person name="Chang C.H."/>
            <person name="Lee J.M."/>
            <person name="Toriumi M.J."/>
            <person name="Chan M.M."/>
            <person name="Tang C.C."/>
            <person name="Onodera C.S."/>
            <person name="Deng J.M."/>
            <person name="Akiyama K."/>
            <person name="Ansari Y."/>
            <person name="Arakawa T."/>
            <person name="Banh J."/>
            <person name="Banno F."/>
            <person name="Bowser L."/>
            <person name="Brooks S.Y."/>
            <person name="Carninci P."/>
            <person name="Chao Q."/>
            <person name="Choy N."/>
            <person name="Enju A."/>
            <person name="Goldsmith A.D."/>
            <person name="Gurjal M."/>
            <person name="Hansen N.F."/>
            <person name="Hayashizaki Y."/>
            <person name="Johnson-Hopson C."/>
            <person name="Hsuan V.W."/>
            <person name="Iida K."/>
            <person name="Karnes M."/>
            <person name="Khan S."/>
            <person name="Koesema E."/>
            <person name="Ishida J."/>
            <person name="Jiang P.X."/>
            <person name="Jones T."/>
            <person name="Kawai J."/>
            <person name="Kamiya A."/>
            <person name="Meyers C."/>
            <person name="Nakajima M."/>
            <person name="Narusaka M."/>
            <person name="Seki M."/>
            <person name="Sakurai T."/>
            <person name="Satou M."/>
            <person name="Tamse R."/>
            <person name="Vaysberg M."/>
            <person name="Wallender E.K."/>
            <person name="Wong C."/>
            <person name="Yamamura Y."/>
            <person name="Yuan S."/>
            <person name="Shinozaki K."/>
            <person name="Davis R.W."/>
            <person name="Theologis A."/>
            <person name="Ecker J.R."/>
        </authorList>
    </citation>
    <scope>NUCLEOTIDE SEQUENCE [LARGE SCALE MRNA]</scope>
    <source>
        <strain>cv. Columbia</strain>
    </source>
</reference>
<reference key="4">
    <citation type="journal article" date="2008" name="Proc. Natl. Acad. Sci. U.S.A.">
        <title>cis-Jasmone induces Arabidopsis genes that affect the chemical ecology of multitrophic interactions with aphids and their parasitoids.</title>
        <authorList>
            <person name="Bruce T.J."/>
            <person name="Matthes M.C."/>
            <person name="Chamberlain K."/>
            <person name="Woodcock C.M."/>
            <person name="Mohib A."/>
            <person name="Webster B."/>
            <person name="Smart L.E."/>
            <person name="Birkett M.A."/>
            <person name="Pickett J.A."/>
            <person name="Napier J.A."/>
        </authorList>
    </citation>
    <scope>INDUCTION BY CIS-JASMONE</scope>
</reference>
<name>C7A13_ARATH</name>
<protein>
    <recommendedName>
        <fullName>Cytochrome P450 72A13</fullName>
        <ecNumber>1.14.-.-</ecNumber>
    </recommendedName>
</protein>
<evidence type="ECO:0000250" key="1"/>
<evidence type="ECO:0000255" key="2"/>
<evidence type="ECO:0000269" key="3">
    <source>
    </source>
</evidence>
<evidence type="ECO:0000305" key="4"/>
<proteinExistence type="evidence at transcript level"/>
<organism>
    <name type="scientific">Arabidopsis thaliana</name>
    <name type="common">Mouse-ear cress</name>
    <dbReference type="NCBI Taxonomy" id="3702"/>
    <lineage>
        <taxon>Eukaryota</taxon>
        <taxon>Viridiplantae</taxon>
        <taxon>Streptophyta</taxon>
        <taxon>Embryophyta</taxon>
        <taxon>Tracheophyta</taxon>
        <taxon>Spermatophyta</taxon>
        <taxon>Magnoliopsida</taxon>
        <taxon>eudicotyledons</taxon>
        <taxon>Gunneridae</taxon>
        <taxon>Pentapetalae</taxon>
        <taxon>rosids</taxon>
        <taxon>malvids</taxon>
        <taxon>Brassicales</taxon>
        <taxon>Brassicaceae</taxon>
        <taxon>Camelineae</taxon>
        <taxon>Arabidopsis</taxon>
    </lineage>
</organism>
<sequence>MEISVASVTVSVAVVVVSWWVWRTLQRVWLKPKMLESYLRRQGLAGTPYTPLVGDLKRNFSMLAEARSKPINLTDDITPRIVPYPLQMLKTHGRTFFTWFGPIPTITIMDPEQIKEVFNKVYDFQKAHTFPLGRLIAAGLVSYDGDKWTKHRRIINPAFHLEKIKNMVPAFHQSCSEIVGEWDKLVTDKQSSCEVDIWPWLVSMTADVISRTAFGSSYKEGQRIFELQAELAQLIIQAFRKAIIPGYRYFPTKGNRRMKAAAREIKFILRGIVNKRLRAREAGEAPSDDLLGILLESNLGQTKGNGMSTEELMEECKLFYFAGQETTTVLLVWTMVLLSQHQDWQARAREEVKQVFGDKEPDAEGLNQLKVMTMILYEVLRLYPPVVQLTRAIHKEMQLGDLTLPGGVQISLPILLIQRDRELWGNDAGEFKPDRFKDGLSKATKNQVSFFPFAWGPRICIGQNFALLEAKMAMTLILRKFSFELSPSYVHAPYTVLTTHPQFGAPLILHKL</sequence>
<keyword id="KW-0349">Heme</keyword>
<keyword id="KW-0408">Iron</keyword>
<keyword id="KW-0472">Membrane</keyword>
<keyword id="KW-0479">Metal-binding</keyword>
<keyword id="KW-0503">Monooxygenase</keyword>
<keyword id="KW-0560">Oxidoreductase</keyword>
<keyword id="KW-1185">Reference proteome</keyword>
<keyword id="KW-0812">Transmembrane</keyword>
<keyword id="KW-1133">Transmembrane helix</keyword>
<dbReference type="EC" id="1.14.-.-"/>
<dbReference type="EMBL" id="AB023038">
    <property type="protein sequence ID" value="BAB02398.1"/>
    <property type="molecule type" value="Genomic_DNA"/>
</dbReference>
<dbReference type="EMBL" id="CP002686">
    <property type="protein sequence ID" value="AEE75552.1"/>
    <property type="molecule type" value="Genomic_DNA"/>
</dbReference>
<dbReference type="EMBL" id="AY065060">
    <property type="protein sequence ID" value="AAL57694.1"/>
    <property type="molecule type" value="mRNA"/>
</dbReference>
<dbReference type="EMBL" id="BT002745">
    <property type="protein sequence ID" value="AAO22574.1"/>
    <property type="molecule type" value="mRNA"/>
</dbReference>
<dbReference type="RefSeq" id="NP_188084.1">
    <property type="nucleotide sequence ID" value="NM_112327.3"/>
</dbReference>
<dbReference type="SMR" id="Q9LUC8"/>
<dbReference type="FunCoup" id="Q9LUC8">
    <property type="interactions" value="465"/>
</dbReference>
<dbReference type="STRING" id="3702.Q9LUC8"/>
<dbReference type="iPTMnet" id="Q9LUC8"/>
<dbReference type="PaxDb" id="3702-AT3G14660.1"/>
<dbReference type="ProteomicsDB" id="240535"/>
<dbReference type="EnsemblPlants" id="AT3G14660.1">
    <property type="protein sequence ID" value="AT3G14660.1"/>
    <property type="gene ID" value="AT3G14660"/>
</dbReference>
<dbReference type="GeneID" id="820694"/>
<dbReference type="Gramene" id="AT3G14660.1">
    <property type="protein sequence ID" value="AT3G14660.1"/>
    <property type="gene ID" value="AT3G14660"/>
</dbReference>
<dbReference type="KEGG" id="ath:AT3G14660"/>
<dbReference type="Araport" id="AT3G14660"/>
<dbReference type="TAIR" id="AT3G14660">
    <property type="gene designation" value="CYP72A13"/>
</dbReference>
<dbReference type="eggNOG" id="KOG0157">
    <property type="taxonomic scope" value="Eukaryota"/>
</dbReference>
<dbReference type="HOGENOM" id="CLU_001570_5_0_1"/>
<dbReference type="InParanoid" id="Q9LUC8"/>
<dbReference type="OMA" id="TKCYSFE"/>
<dbReference type="PhylomeDB" id="Q9LUC8"/>
<dbReference type="BioCyc" id="ARA:AT3G14660-MONOMER"/>
<dbReference type="PRO" id="PR:Q9LUC8"/>
<dbReference type="Proteomes" id="UP000006548">
    <property type="component" value="Chromosome 3"/>
</dbReference>
<dbReference type="ExpressionAtlas" id="Q9LUC8">
    <property type="expression patterns" value="baseline and differential"/>
</dbReference>
<dbReference type="GO" id="GO:0016020">
    <property type="term" value="C:membrane"/>
    <property type="evidence" value="ECO:0007669"/>
    <property type="project" value="UniProtKB-SubCell"/>
</dbReference>
<dbReference type="GO" id="GO:0020037">
    <property type="term" value="F:heme binding"/>
    <property type="evidence" value="ECO:0007669"/>
    <property type="project" value="InterPro"/>
</dbReference>
<dbReference type="GO" id="GO:0005506">
    <property type="term" value="F:iron ion binding"/>
    <property type="evidence" value="ECO:0007669"/>
    <property type="project" value="InterPro"/>
</dbReference>
<dbReference type="GO" id="GO:0004497">
    <property type="term" value="F:monooxygenase activity"/>
    <property type="evidence" value="ECO:0007669"/>
    <property type="project" value="UniProtKB-KW"/>
</dbReference>
<dbReference type="GO" id="GO:0016705">
    <property type="term" value="F:oxidoreductase activity, acting on paired donors, with incorporation or reduction of molecular oxygen"/>
    <property type="evidence" value="ECO:0007669"/>
    <property type="project" value="InterPro"/>
</dbReference>
<dbReference type="CDD" id="cd20642">
    <property type="entry name" value="CYP72"/>
    <property type="match status" value="1"/>
</dbReference>
<dbReference type="FunFam" id="1.10.630.10:FF:000029">
    <property type="entry name" value="Cytochrome P450 734A1"/>
    <property type="match status" value="1"/>
</dbReference>
<dbReference type="Gene3D" id="1.10.630.10">
    <property type="entry name" value="Cytochrome P450"/>
    <property type="match status" value="1"/>
</dbReference>
<dbReference type="InterPro" id="IPR001128">
    <property type="entry name" value="Cyt_P450"/>
</dbReference>
<dbReference type="InterPro" id="IPR002401">
    <property type="entry name" value="Cyt_P450_E_grp-I"/>
</dbReference>
<dbReference type="InterPro" id="IPR036396">
    <property type="entry name" value="Cyt_P450_sf"/>
</dbReference>
<dbReference type="InterPro" id="IPR050665">
    <property type="entry name" value="Cytochrome_P450_Monooxygen"/>
</dbReference>
<dbReference type="PANTHER" id="PTHR24282:SF255">
    <property type="entry name" value="CYTOCHROME P450 72A11-RELATED"/>
    <property type="match status" value="1"/>
</dbReference>
<dbReference type="PANTHER" id="PTHR24282">
    <property type="entry name" value="CYTOCHROME P450 FAMILY MEMBER"/>
    <property type="match status" value="1"/>
</dbReference>
<dbReference type="Pfam" id="PF00067">
    <property type="entry name" value="p450"/>
    <property type="match status" value="1"/>
</dbReference>
<dbReference type="PRINTS" id="PR00463">
    <property type="entry name" value="EP450I"/>
</dbReference>
<dbReference type="PRINTS" id="PR00385">
    <property type="entry name" value="P450"/>
</dbReference>
<dbReference type="SUPFAM" id="SSF48264">
    <property type="entry name" value="Cytochrome P450"/>
    <property type="match status" value="1"/>
</dbReference>
<accession>Q9LUC8</accession>
<comment type="cofactor">
    <cofactor evidence="1">
        <name>heme</name>
        <dbReference type="ChEBI" id="CHEBI:30413"/>
    </cofactor>
</comment>
<comment type="subcellular location">
    <subcellularLocation>
        <location evidence="4">Membrane</location>
        <topology evidence="4">Single-pass membrane protein</topology>
    </subcellularLocation>
</comment>
<comment type="induction">
    <text evidence="3">By cis-jasmone.</text>
</comment>
<comment type="similarity">
    <text evidence="4">Belongs to the cytochrome P450 family.</text>
</comment>